<gene>
    <name type="primary">rexo4</name>
    <name type="synonym">xpmc2</name>
</gene>
<protein>
    <recommendedName>
        <fullName>RNA exonuclease 4</fullName>
        <ecNumber>3.1.-.-</ecNumber>
    </recommendedName>
    <alternativeName>
        <fullName>Exonuclease XPMC2</fullName>
    </alternativeName>
    <alternativeName>
        <fullName>Prevents mitotic catastrophe 2 protein</fullName>
    </alternativeName>
</protein>
<evidence type="ECO:0000256" key="1">
    <source>
        <dbReference type="SAM" id="MobiDB-lite"/>
    </source>
</evidence>
<evidence type="ECO:0000305" key="2"/>
<evidence type="ECO:0000305" key="3">
    <source>
    </source>
</evidence>
<keyword id="KW-0269">Exonuclease</keyword>
<keyword id="KW-0378">Hydrolase</keyword>
<keyword id="KW-0540">Nuclease</keyword>
<keyword id="KW-0539">Nucleus</keyword>
<keyword id="KW-1185">Reference proteome</keyword>
<feature type="chain" id="PRO_0000131705" description="RNA exonuclease 4">
    <location>
        <begin position="1"/>
        <end position="421"/>
    </location>
</feature>
<feature type="domain" description="Exonuclease">
    <location>
        <begin position="234"/>
        <end position="385"/>
    </location>
</feature>
<feature type="region of interest" description="Disordered" evidence="1">
    <location>
        <begin position="1"/>
        <end position="51"/>
    </location>
</feature>
<feature type="region of interest" description="Disordered" evidence="1">
    <location>
        <begin position="79"/>
        <end position="179"/>
    </location>
</feature>
<feature type="compositionally biased region" description="Polar residues" evidence="1">
    <location>
        <begin position="11"/>
        <end position="24"/>
    </location>
</feature>
<feature type="compositionally biased region" description="Basic residues" evidence="1">
    <location>
        <begin position="25"/>
        <end position="36"/>
    </location>
</feature>
<feature type="compositionally biased region" description="Basic and acidic residues" evidence="1">
    <location>
        <begin position="92"/>
        <end position="107"/>
    </location>
</feature>
<feature type="compositionally biased region" description="Basic and acidic residues" evidence="1">
    <location>
        <begin position="140"/>
        <end position="149"/>
    </location>
</feature>
<feature type="compositionally biased region" description="Basic and acidic residues" evidence="1">
    <location>
        <begin position="161"/>
        <end position="170"/>
    </location>
</feature>
<feature type="sequence conflict" description="In Ref. 1; AAA82179." evidence="2" ref="1">
    <original>K</original>
    <variation>M</variation>
    <location>
        <position position="8"/>
    </location>
</feature>
<sequence length="421" mass="46697">MAKAKVKKDQSPCSGSLGKTANTPKQKRKQKQRKFWQNHPKITTKTGETKKVSLLLPPKGPQEFSSNWKALQELLKPKENQALPATTLAKCPKKDQKVSEKKTEESVPQKSGHKINGGITSVSAIAKGAKAPSQATPTKAAEKSDEVSKGKKRKIMAEATDTEHQGKKPQGEAQPQPPKVDIWFDDVDPDDIEAALGPEAGRVAREMQGITDTRSPTVDKILVKERAFEGLTRTVAMDCEMVGVGMDGEESILARVSIVNLFGKCVYDKYVKPTERVTDYRTAVSGIRPEDVKKGEPFKVVQKEVSEILRGRTLVGHAVHNDLKILFLDHPKKAIRDTQKYKPFKQKVKSGRPSLKLLCEKILNVKVQTGEHCSVQDAQAAMRLYTMEKKSWEVAIKAKYTGVMPVDRKSKGPQKDKQCPQ</sequence>
<proteinExistence type="evidence at transcript level"/>
<dbReference type="EC" id="3.1.-.-"/>
<dbReference type="EMBL" id="U10185">
    <property type="protein sequence ID" value="AAA82179.1"/>
    <property type="molecule type" value="mRNA"/>
</dbReference>
<dbReference type="EMBL" id="BC043958">
    <property type="protein sequence ID" value="AAH43958.1"/>
    <property type="molecule type" value="mRNA"/>
</dbReference>
<dbReference type="PIR" id="S53818">
    <property type="entry name" value="S53818"/>
</dbReference>
<dbReference type="RefSeq" id="NP_001079510.1">
    <property type="nucleotide sequence ID" value="NM_001086041.1"/>
</dbReference>
<dbReference type="SMR" id="Q91560"/>
<dbReference type="DNASU" id="379197"/>
<dbReference type="GeneID" id="379197"/>
<dbReference type="KEGG" id="xla:379197"/>
<dbReference type="AGR" id="Xenbase:XB-GENE-6251614"/>
<dbReference type="CTD" id="379197"/>
<dbReference type="Xenbase" id="XB-GENE-6251614">
    <property type="gene designation" value="rexo4.S"/>
</dbReference>
<dbReference type="OrthoDB" id="8191639at2759"/>
<dbReference type="Proteomes" id="UP000186698">
    <property type="component" value="Chromosome 8S"/>
</dbReference>
<dbReference type="Bgee" id="379197">
    <property type="expression patterns" value="Expressed in neurula embryo and 19 other cell types or tissues"/>
</dbReference>
<dbReference type="GO" id="GO:0005634">
    <property type="term" value="C:nucleus"/>
    <property type="evidence" value="ECO:0000318"/>
    <property type="project" value="GO_Central"/>
</dbReference>
<dbReference type="GO" id="GO:0008408">
    <property type="term" value="F:3'-5' exonuclease activity"/>
    <property type="evidence" value="ECO:0007669"/>
    <property type="project" value="InterPro"/>
</dbReference>
<dbReference type="GO" id="GO:0004527">
    <property type="term" value="F:exonuclease activity"/>
    <property type="evidence" value="ECO:0000318"/>
    <property type="project" value="GO_Central"/>
</dbReference>
<dbReference type="GO" id="GO:0003676">
    <property type="term" value="F:nucleic acid binding"/>
    <property type="evidence" value="ECO:0007669"/>
    <property type="project" value="InterPro"/>
</dbReference>
<dbReference type="GO" id="GO:0006308">
    <property type="term" value="P:DNA catabolic process"/>
    <property type="evidence" value="ECO:0000318"/>
    <property type="project" value="GO_Central"/>
</dbReference>
<dbReference type="GO" id="GO:0006396">
    <property type="term" value="P:RNA processing"/>
    <property type="evidence" value="ECO:0000318"/>
    <property type="project" value="GO_Central"/>
</dbReference>
<dbReference type="GO" id="GO:0006364">
    <property type="term" value="P:rRNA processing"/>
    <property type="evidence" value="ECO:0007669"/>
    <property type="project" value="InterPro"/>
</dbReference>
<dbReference type="CDD" id="cd06144">
    <property type="entry name" value="REX4_like"/>
    <property type="match status" value="1"/>
</dbReference>
<dbReference type="FunFam" id="3.30.420.10:FF:000007">
    <property type="entry name" value="Interferon-stimulated exonuclease gene 20"/>
    <property type="match status" value="1"/>
</dbReference>
<dbReference type="Gene3D" id="3.30.420.10">
    <property type="entry name" value="Ribonuclease H-like superfamily/Ribonuclease H"/>
    <property type="match status" value="1"/>
</dbReference>
<dbReference type="InterPro" id="IPR013520">
    <property type="entry name" value="Exonuclease_RNaseT/DNA_pol3"/>
</dbReference>
<dbReference type="InterPro" id="IPR037431">
    <property type="entry name" value="REX4_DEDDh_dom"/>
</dbReference>
<dbReference type="InterPro" id="IPR047021">
    <property type="entry name" value="REXO1/3/4-like"/>
</dbReference>
<dbReference type="InterPro" id="IPR012337">
    <property type="entry name" value="RNaseH-like_sf"/>
</dbReference>
<dbReference type="InterPro" id="IPR036397">
    <property type="entry name" value="RNaseH_sf"/>
</dbReference>
<dbReference type="PANTHER" id="PTHR12801:SF158">
    <property type="entry name" value="RNA EXONUCLEASE 4"/>
    <property type="match status" value="1"/>
</dbReference>
<dbReference type="PANTHER" id="PTHR12801">
    <property type="entry name" value="RNA EXONUCLEASE REXO1 / RECO3 FAMILY MEMBER-RELATED"/>
    <property type="match status" value="1"/>
</dbReference>
<dbReference type="Pfam" id="PF00929">
    <property type="entry name" value="RNase_T"/>
    <property type="match status" value="1"/>
</dbReference>
<dbReference type="SMART" id="SM00479">
    <property type="entry name" value="EXOIII"/>
    <property type="match status" value="1"/>
</dbReference>
<dbReference type="SUPFAM" id="SSF53098">
    <property type="entry name" value="Ribonuclease H-like"/>
    <property type="match status" value="1"/>
</dbReference>
<name>REXO4_XENLA</name>
<organism>
    <name type="scientific">Xenopus laevis</name>
    <name type="common">African clawed frog</name>
    <dbReference type="NCBI Taxonomy" id="8355"/>
    <lineage>
        <taxon>Eukaryota</taxon>
        <taxon>Metazoa</taxon>
        <taxon>Chordata</taxon>
        <taxon>Craniata</taxon>
        <taxon>Vertebrata</taxon>
        <taxon>Euteleostomi</taxon>
        <taxon>Amphibia</taxon>
        <taxon>Batrachia</taxon>
        <taxon>Anura</taxon>
        <taxon>Pipoidea</taxon>
        <taxon>Pipidae</taxon>
        <taxon>Xenopodinae</taxon>
        <taxon>Xenopus</taxon>
        <taxon>Xenopus</taxon>
    </lineage>
</organism>
<reference key="1">
    <citation type="journal article" date="1995" name="Mol. Gen. Genet.">
        <title>Cloning and expression of a Xenopus gene that prevents mitotic catastrophe in fission yeast.</title>
        <authorList>
            <person name="Su J.-Y."/>
            <person name="Maller J.L."/>
        </authorList>
    </citation>
    <scope>NUCLEOTIDE SEQUENCE [MRNA]</scope>
    <scope>SUBCELLULAR LOCATION</scope>
    <source>
        <tissue>Ovary</tissue>
    </source>
</reference>
<reference key="2">
    <citation type="submission" date="2003-01" db="EMBL/GenBank/DDBJ databases">
        <authorList>
            <consortium name="NIH - Xenopus Gene Collection (XGC) project"/>
        </authorList>
    </citation>
    <scope>NUCLEOTIDE SEQUENCE [LARGE SCALE MRNA]</scope>
    <source>
        <tissue>Embryo</tissue>
    </source>
</reference>
<comment type="subcellular location">
    <subcellularLocation>
        <location evidence="3">Nucleus</location>
    </subcellularLocation>
</comment>
<comment type="similarity">
    <text evidence="2">Belongs to the REXO4 family.</text>
</comment>
<accession>Q91560</accession>
<accession>Q7ZY64</accession>